<feature type="chain" id="PRO_0000293219" description="Small ribosomal subunit protein uS5">
    <location>
        <begin position="1"/>
        <end position="214"/>
    </location>
</feature>
<feature type="domain" description="S5 DRBM" evidence="1">
    <location>
        <begin position="55"/>
        <end position="118"/>
    </location>
</feature>
<protein>
    <recommendedName>
        <fullName evidence="1">Small ribosomal subunit protein uS5</fullName>
    </recommendedName>
    <alternativeName>
        <fullName evidence="2">30S ribosomal protein S5</fullName>
    </alternativeName>
</protein>
<gene>
    <name evidence="1" type="primary">rps5</name>
    <name type="ordered locus">Smar_1039</name>
</gene>
<proteinExistence type="inferred from homology"/>
<dbReference type="EMBL" id="CP000575">
    <property type="protein sequence ID" value="ABN70137.1"/>
    <property type="molecule type" value="Genomic_DNA"/>
</dbReference>
<dbReference type="RefSeq" id="WP_011839328.1">
    <property type="nucleotide sequence ID" value="NC_009033.1"/>
</dbReference>
<dbReference type="SMR" id="A3DNC7"/>
<dbReference type="STRING" id="399550.Smar_1039"/>
<dbReference type="GeneID" id="4906938"/>
<dbReference type="KEGG" id="smr:Smar_1039"/>
<dbReference type="eggNOG" id="arCOG04087">
    <property type="taxonomic scope" value="Archaea"/>
</dbReference>
<dbReference type="HOGENOM" id="CLU_065898_0_1_2"/>
<dbReference type="OrthoDB" id="38155at2157"/>
<dbReference type="Proteomes" id="UP000000254">
    <property type="component" value="Chromosome"/>
</dbReference>
<dbReference type="GO" id="GO:0022627">
    <property type="term" value="C:cytosolic small ribosomal subunit"/>
    <property type="evidence" value="ECO:0007669"/>
    <property type="project" value="TreeGrafter"/>
</dbReference>
<dbReference type="GO" id="GO:0019843">
    <property type="term" value="F:rRNA binding"/>
    <property type="evidence" value="ECO:0007669"/>
    <property type="project" value="UniProtKB-UniRule"/>
</dbReference>
<dbReference type="GO" id="GO:0003735">
    <property type="term" value="F:structural constituent of ribosome"/>
    <property type="evidence" value="ECO:0007669"/>
    <property type="project" value="InterPro"/>
</dbReference>
<dbReference type="GO" id="GO:0006412">
    <property type="term" value="P:translation"/>
    <property type="evidence" value="ECO:0007669"/>
    <property type="project" value="UniProtKB-UniRule"/>
</dbReference>
<dbReference type="FunFam" id="3.30.160.20:FF:000002">
    <property type="entry name" value="40S ribosomal protein S2"/>
    <property type="match status" value="1"/>
</dbReference>
<dbReference type="FunFam" id="3.30.230.10:FF:000004">
    <property type="entry name" value="40S ribosomal protein S2"/>
    <property type="match status" value="1"/>
</dbReference>
<dbReference type="Gene3D" id="3.30.160.20">
    <property type="match status" value="1"/>
</dbReference>
<dbReference type="Gene3D" id="3.30.230.10">
    <property type="match status" value="1"/>
</dbReference>
<dbReference type="HAMAP" id="MF_01307_A">
    <property type="entry name" value="Ribosomal_uS5_A"/>
    <property type="match status" value="1"/>
</dbReference>
<dbReference type="InterPro" id="IPR020568">
    <property type="entry name" value="Ribosomal_Su5_D2-typ_SF"/>
</dbReference>
<dbReference type="InterPro" id="IPR000851">
    <property type="entry name" value="Ribosomal_uS5"/>
</dbReference>
<dbReference type="InterPro" id="IPR047866">
    <property type="entry name" value="Ribosomal_uS5_arc"/>
</dbReference>
<dbReference type="InterPro" id="IPR005324">
    <property type="entry name" value="Ribosomal_uS5_C"/>
</dbReference>
<dbReference type="InterPro" id="IPR005711">
    <property type="entry name" value="Ribosomal_uS5_euk/arc"/>
</dbReference>
<dbReference type="InterPro" id="IPR013810">
    <property type="entry name" value="Ribosomal_uS5_N"/>
</dbReference>
<dbReference type="InterPro" id="IPR018192">
    <property type="entry name" value="Ribosomal_uS5_N_CS"/>
</dbReference>
<dbReference type="InterPro" id="IPR014721">
    <property type="entry name" value="Ribsml_uS5_D2-typ_fold_subgr"/>
</dbReference>
<dbReference type="NCBIfam" id="NF003125">
    <property type="entry name" value="PRK04044.1"/>
    <property type="match status" value="1"/>
</dbReference>
<dbReference type="NCBIfam" id="TIGR01020">
    <property type="entry name" value="uS5_euk_arch"/>
    <property type="match status" value="1"/>
</dbReference>
<dbReference type="PANTHER" id="PTHR13718:SF4">
    <property type="entry name" value="40S RIBOSOMAL PROTEIN S2"/>
    <property type="match status" value="1"/>
</dbReference>
<dbReference type="PANTHER" id="PTHR13718">
    <property type="entry name" value="RIBOSOMAL S SUBUNIT"/>
    <property type="match status" value="1"/>
</dbReference>
<dbReference type="Pfam" id="PF00333">
    <property type="entry name" value="Ribosomal_S5"/>
    <property type="match status" value="1"/>
</dbReference>
<dbReference type="Pfam" id="PF03719">
    <property type="entry name" value="Ribosomal_S5_C"/>
    <property type="match status" value="1"/>
</dbReference>
<dbReference type="SUPFAM" id="SSF54768">
    <property type="entry name" value="dsRNA-binding domain-like"/>
    <property type="match status" value="1"/>
</dbReference>
<dbReference type="SUPFAM" id="SSF54211">
    <property type="entry name" value="Ribosomal protein S5 domain 2-like"/>
    <property type="match status" value="1"/>
</dbReference>
<dbReference type="PROSITE" id="PS00585">
    <property type="entry name" value="RIBOSOMAL_S5"/>
    <property type="match status" value="1"/>
</dbReference>
<dbReference type="PROSITE" id="PS50881">
    <property type="entry name" value="S5_DSRBD"/>
    <property type="match status" value="1"/>
</dbReference>
<comment type="function">
    <text evidence="1">With S4 and S12 plays an important role in translational accuracy.</text>
</comment>
<comment type="subunit">
    <text evidence="1">Part of the 30S ribosomal subunit. Contacts protein S4.</text>
</comment>
<comment type="domain">
    <text>The N-terminal domain interacts with the head of the 30S subunit; the C-terminal domain interacts with the body and contacts protein S4. The interaction surface between S4 and S5 is involved in control of translational fidelity.</text>
</comment>
<comment type="similarity">
    <text evidence="1">Belongs to the universal ribosomal protein uS5 family.</text>
</comment>
<name>RS5_STAMF</name>
<sequence length="214" mass="23509">MPMSAIDKEALETWVPRTRVGKMVVEGKITSLKEIFDRNLPLLEPEIVDYLLPDLKYERLDVGIVQKVTDAGRRSRFRVVVVVGNEDGFVGVGSGKARQYLVALRKALRNAKLNITPVRRGCGSWECRCGEPHSIPFTVQGKSGSVVVVLKPAPKGTGLVAGDTAKAVLRMAGIKDVWTETFGKTKTTLNFAKAVVNALRNTYKFVAPVDWLKA</sequence>
<reference key="1">
    <citation type="journal article" date="2009" name="BMC Genomics">
        <title>The complete genome sequence of Staphylothermus marinus reveals differences in sulfur metabolism among heterotrophic Crenarchaeota.</title>
        <authorList>
            <person name="Anderson I.J."/>
            <person name="Dharmarajan L."/>
            <person name="Rodriguez J."/>
            <person name="Hooper S."/>
            <person name="Porat I."/>
            <person name="Ulrich L.E."/>
            <person name="Elkins J.G."/>
            <person name="Mavromatis K."/>
            <person name="Sun H."/>
            <person name="Land M."/>
            <person name="Lapidus A."/>
            <person name="Lucas S."/>
            <person name="Barry K."/>
            <person name="Huber H."/>
            <person name="Zhulin I.B."/>
            <person name="Whitman W.B."/>
            <person name="Mukhopadhyay B."/>
            <person name="Woese C."/>
            <person name="Bristow J."/>
            <person name="Kyrpides N."/>
        </authorList>
    </citation>
    <scope>NUCLEOTIDE SEQUENCE [LARGE SCALE GENOMIC DNA]</scope>
    <source>
        <strain>ATCC 43588 / DSM 3639 / JCM 9404 / F1</strain>
    </source>
</reference>
<reference key="2">
    <citation type="journal article" date="2009" name="Stand. Genomic Sci.">
        <title>Complete genome sequence of Staphylothermus marinus Stetter and Fiala 1986 type strain F1.</title>
        <authorList>
            <person name="Anderson I.J."/>
            <person name="Sun H."/>
            <person name="Lapidus A."/>
            <person name="Copeland A."/>
            <person name="Glavina Del Rio T."/>
            <person name="Tice H."/>
            <person name="Dalin E."/>
            <person name="Lucas S."/>
            <person name="Barry K."/>
            <person name="Land M."/>
            <person name="Richardson P."/>
            <person name="Huber H."/>
            <person name="Kyrpides N.C."/>
        </authorList>
    </citation>
    <scope>NUCLEOTIDE SEQUENCE [LARGE SCALE GENOMIC DNA]</scope>
    <source>
        <strain>ATCC 43588 / DSM 3639 / JCM 9404 / F1</strain>
    </source>
</reference>
<organism>
    <name type="scientific">Staphylothermus marinus (strain ATCC 43588 / DSM 3639 / JCM 9404 / F1)</name>
    <dbReference type="NCBI Taxonomy" id="399550"/>
    <lineage>
        <taxon>Archaea</taxon>
        <taxon>Thermoproteota</taxon>
        <taxon>Thermoprotei</taxon>
        <taxon>Desulfurococcales</taxon>
        <taxon>Desulfurococcaceae</taxon>
        <taxon>Staphylothermus</taxon>
    </lineage>
</organism>
<evidence type="ECO:0000255" key="1">
    <source>
        <dbReference type="HAMAP-Rule" id="MF_01307"/>
    </source>
</evidence>
<evidence type="ECO:0000305" key="2"/>
<accession>A3DNC7</accession>
<keyword id="KW-1185">Reference proteome</keyword>
<keyword id="KW-0687">Ribonucleoprotein</keyword>
<keyword id="KW-0689">Ribosomal protein</keyword>
<keyword id="KW-0694">RNA-binding</keyword>
<keyword id="KW-0699">rRNA-binding</keyword>